<feature type="chain" id="PRO_0000084014" description="Cytadherence high molecular weight protein 2">
    <location>
        <begin position="1"/>
        <end position="1818"/>
    </location>
</feature>
<feature type="coiled-coil region" evidence="2">
    <location>
        <begin position="31"/>
        <end position="880"/>
    </location>
</feature>
<feature type="coiled-coil region" evidence="2">
    <location>
        <begin position="919"/>
        <end position="1607"/>
    </location>
</feature>
<feature type="coiled-coil region" evidence="2">
    <location>
        <begin position="1644"/>
        <end position="1755"/>
    </location>
</feature>
<feature type="coiled-coil region" evidence="2">
    <location>
        <begin position="1786"/>
        <end position="1817"/>
    </location>
</feature>
<keyword id="KW-0175">Coiled coil</keyword>
<keyword id="KW-0200">Cytadherence</keyword>
<keyword id="KW-0597">Phosphoprotein</keyword>
<keyword id="KW-1185">Reference proteome</keyword>
<keyword id="KW-0843">Virulence</keyword>
<sequence>MNDTDKKFPLQPVYDTGFDDGYLQRDYEKCLESAAANDAQTVELQTQLLAEIKNLENEIKALKAQESRQPDPHNNARIQSLEASLNRLVNEYNNFEFQKNYMVDRVAELNNKARFFKDELKRLQQENAAFVNSRYANWADFQSNYQLKLDQFQALIDQQNQTIKQLNEQIAANQGLIDQNVQRLQQNHSLDQQERDALLYEVDHLYNELYELENQKRLVGIEYEATYQDLVSADAELQNVYETIAQNQANFQKQCDAYWAQLKQVEQQIQTTKQELVDEESTLKVRLNDADFYINSRLAELDDLTSKINERDFVSKEQAQDVKASLANLTKEKERLSAEKDSFERLRNTALNDINRMEQENALFAKHLEQQQYEFERKQQESLLKLETEHKQLQKRIGEFKIESEAKSEALLIQERELLEKRREIDDLLTQASLEYEQQRRTNQVLKEKHRQVQQHFQNLVHAKKKLDQKRHYLAEQKRIDEEQIFKLKEKIATERRELEKLYLVKKQKQDQKENDLLIFEKQLRQYQADFENEIEEKQNELFASQKSLQKSFTQLKNKEAELNQKAQKIAEDWAHLKQNKHHHADLEIFLEGEFNHLQQEKHKLLEARTQFDNRVSLLSARFKQKQAELVKQKQSLEQLTAAFNKEQEAVERDWKDRLANLEKQKEMLGDKVHQFDENSLNISKKLAERELAIKFKEKELEAAQKQLSLDNNNNAGLKLQLDKLSESLKTERLELEASKERILDFYDESSRRIADYESDLQARLAEVKTLEKNQQETAAKSERELKVALEKLNQAKKAFLQIRKQQLLEIASVKQQLAQKANLLKNQQAELDKQTEELEAAFLEQDTDKKELEKALHSVKSKQELLERERSFLLQKQREFAEHVAGFKRQVHFKTTQMQRLSEFNKQQQSEQIKRETELKIAFADLKKDYQLFELQKNQEFQQIEQKHKELELLAQKQAELKQELEQKATALASQDQDTVQAKLDLARQQHELELRQNAFNQASLSLNKQREQLTNQVKVLHGELKKRHEKLTLKDRLLAEKEKDQHKKDAEINQRFKQFENEYADFDQAKKRELQELNQIRRNLEQSNASLLKKRNQLTLDFALLRKVQHNTQTNRVQLNTQIKEFLLEKKNFQKASDEAALQKALLIKRLRSFASKLQLQREALAIQKLEFDKRDEQQKSEINNAKLQLEQFKLEKQNFDEAKQKQLIEFKDQCQRLDVEKRLLKQKLVQLKNLSKSYLTYKNRADLSQQQLQHKYANLLELKEKLQTAKRALDKKHRAIYGKMAQFVSELRQEKKQLLSAQKQVDDKSRLLEQNQRHLQNLSSETKKKRQSLEHDINKFDQRRKEAVSSILNSHKKLKQKEGELQGILQKLSLKKTQIEQEFSKLYQQREKLDRQRTTLSKLHRELKAQNEATAHKNREVLEIENYYKKELQRLTTEKSEFDNNKNRLFEYFRKIRNEIEKKEAHIKTVLEETQKKRHLVETEAVKLHLQKQSIISKGQELKEIKERVSRDISHTNKQREELNSLLHQNKLLQKNLAEREREINNKDSLLTQKIQTAKQKLSEKEARILKLLEKMRAVEQQYQAEITRLKTRNADLEKNDNKHLFPPLFKINGNDMNYPYPYPWFYPQQKQEDSSNQIRHLFEQQLQFMQQRYENELTELRRQRALLEKKLDQIQLESQLSAKKNDFEKVEQMMQKLLEKTEQKLSAFDQKINALAEQINTQKAEHADSEKQQLLLRIEQLEKQNLAQAVQTPQPVQPVVQAPAVVPQVIQPQVVQSQPAFLATQQSISKQQQIAQLNAEINSIKKLIAQKAAK</sequence>
<comment type="function">
    <text evidence="1">Component of the cytoskeleton-like structure which stabilizes the shape of the wall-less Mycoplasma. This cytoskeleton-like network of accessory proteins containing HMW proteins 1 to 5 allows the proper anchoring of cytadhesin proteins in the mycoplasmal membrane at the attachment organelle (By similarity).</text>
</comment>
<comment type="PTM">
    <text evidence="3">Phosphorylated mainly on serine residues.</text>
</comment>
<reference key="1">
    <citation type="journal article" date="1996" name="Nucleic Acids Res.">
        <title>Complete sequence analysis of the genome of the bacterium Mycoplasma pneumoniae.</title>
        <authorList>
            <person name="Himmelreich R."/>
            <person name="Hilbert H."/>
            <person name="Plagens H."/>
            <person name="Pirkl E."/>
            <person name="Li B.-C."/>
            <person name="Herrmann R."/>
        </authorList>
    </citation>
    <scope>NUCLEOTIDE SEQUENCE [LARGE SCALE GENOMIC DNA]</scope>
    <source>
        <strain>ATCC 29342 / M129 / Subtype 1</strain>
    </source>
</reference>
<reference key="2">
    <citation type="journal article" date="1997" name="J. Bacteriol.">
        <title>Transposon mutagenesis reinforces the correlation between Mycoplasma pneumoniae cytoskeletal protein HMW2 and cytadherence.</title>
        <authorList>
            <person name="Krause D.C."/>
            <person name="Proft T."/>
            <person name="Hedreyda C.T."/>
            <person name="Hilbert H."/>
            <person name="Plagens H."/>
            <person name="Herrmann R."/>
        </authorList>
    </citation>
    <scope>NUCLEOTIDE SEQUENCE [GENOMIC DNA]</scope>
    <source>
        <strain>ATCC 29342 / M129 / Subtype 1</strain>
    </source>
</reference>
<reference key="3">
    <citation type="journal article" date="1995" name="J. Bacteriol.">
        <title>Phosphorylation of Mycoplasma pneumoniae cytadherence-accessory proteins in cell extracts.</title>
        <authorList>
            <person name="Krebes K.A."/>
            <person name="Dirksen L.B."/>
            <person name="Krause D.C."/>
        </authorList>
    </citation>
    <scope>PHOSPHORYLATION</scope>
</reference>
<protein>
    <recommendedName>
        <fullName>Cytadherence high molecular weight protein 2</fullName>
    </recommendedName>
    <alternativeName>
        <fullName>Cytadherence accessory protein 2</fullName>
    </alternativeName>
</protein>
<accession>P75471</accession>
<organism>
    <name type="scientific">Mycoplasma pneumoniae (strain ATCC 29342 / M129 / Subtype 1)</name>
    <name type="common">Mycoplasmoides pneumoniae</name>
    <dbReference type="NCBI Taxonomy" id="272634"/>
    <lineage>
        <taxon>Bacteria</taxon>
        <taxon>Bacillati</taxon>
        <taxon>Mycoplasmatota</taxon>
        <taxon>Mycoplasmoidales</taxon>
        <taxon>Mycoplasmoidaceae</taxon>
        <taxon>Mycoplasmoides</taxon>
    </lineage>
</organism>
<proteinExistence type="evidence at protein level"/>
<evidence type="ECO:0000250" key="1"/>
<evidence type="ECO:0000255" key="2"/>
<evidence type="ECO:0000269" key="3">
    <source>
    </source>
</evidence>
<gene>
    <name type="primary">hmw2</name>
    <name type="ordered locus">MPN_310</name>
    <name type="ORF">MP526</name>
</gene>
<dbReference type="EMBL" id="U00089">
    <property type="protein sequence ID" value="AAB96174.1"/>
    <property type="molecule type" value="Genomic_DNA"/>
</dbReference>
<dbReference type="EMBL" id="U59896">
    <property type="protein sequence ID" value="AAB52527.1"/>
    <property type="molecule type" value="Genomic_DNA"/>
</dbReference>
<dbReference type="PIR" id="S73852">
    <property type="entry name" value="S73852"/>
</dbReference>
<dbReference type="RefSeq" id="NP_109998.1">
    <property type="nucleotide sequence ID" value="NC_000912.1"/>
</dbReference>
<dbReference type="RefSeq" id="WP_010874666.1">
    <property type="nucleotide sequence ID" value="NC_000912.1"/>
</dbReference>
<dbReference type="SMR" id="P75471"/>
<dbReference type="IntAct" id="P75471">
    <property type="interactions" value="1"/>
</dbReference>
<dbReference type="STRING" id="272634.MPN_310"/>
<dbReference type="EnsemblBacteria" id="AAB96174">
    <property type="protein sequence ID" value="AAB96174"/>
    <property type="gene ID" value="MPN_310"/>
</dbReference>
<dbReference type="KEGG" id="mpn:MPN_310"/>
<dbReference type="PATRIC" id="fig|272634.6.peg.334"/>
<dbReference type="HOGENOM" id="CLU_237675_0_0_14"/>
<dbReference type="OrthoDB" id="398247at2"/>
<dbReference type="BioCyc" id="MPNE272634:G1GJ3-494-MONOMER"/>
<dbReference type="Proteomes" id="UP000000808">
    <property type="component" value="Chromosome"/>
</dbReference>
<dbReference type="GO" id="GO:0020035">
    <property type="term" value="P:adhesion of symbiont to microvasculature"/>
    <property type="evidence" value="ECO:0007669"/>
    <property type="project" value="UniProtKB-KW"/>
</dbReference>
<dbReference type="InterPro" id="IPR016430">
    <property type="entry name" value="Cytadherence_Hmw2"/>
</dbReference>
<dbReference type="PIRSF" id="PIRSF004800">
    <property type="entry name" value="Hmw2"/>
    <property type="match status" value="1"/>
</dbReference>
<name>HMW2_MYCPN</name>